<sequence length="86" mass="9464">MKLTCVLIIAVLFLTACQLATAKTYSKGRQKHRALRSTDKNIKLTRRCTPDDGACAEPVQCCSTFCNPVTNMCIDWLGIGLSRSVL</sequence>
<feature type="signal peptide" evidence="2">
    <location>
        <begin position="1"/>
        <end position="22"/>
    </location>
</feature>
<feature type="propeptide" id="PRO_0000345108" evidence="1">
    <location>
        <begin position="23"/>
        <end position="45"/>
    </location>
</feature>
<feature type="peptide" id="PRO_0000345109" description="Conotoxin S6.10">
    <location>
        <begin position="48"/>
        <end position="86"/>
    </location>
</feature>
<feature type="disulfide bond" evidence="1">
    <location>
        <begin position="48"/>
        <end position="62"/>
    </location>
</feature>
<feature type="disulfide bond" evidence="1">
    <location>
        <begin position="55"/>
        <end position="66"/>
    </location>
</feature>
<feature type="disulfide bond" evidence="1">
    <location>
        <begin position="61"/>
        <end position="73"/>
    </location>
</feature>
<accession>P0C833</accession>
<comment type="subcellular location">
    <subcellularLocation>
        <location evidence="1">Secreted</location>
    </subcellularLocation>
</comment>
<comment type="tissue specificity">
    <text>Expressed by the venom duct.</text>
</comment>
<comment type="domain">
    <text evidence="1">The presence of a 'disulfide through disulfide knot' structurally defines this protein as a knottin.</text>
</comment>
<comment type="domain">
    <text>The cysteine framework is VI/VII (C-C-CC-C-C).</text>
</comment>
<comment type="similarity">
    <text evidence="3">Belongs to the conotoxin O1 superfamily.</text>
</comment>
<dbReference type="ConoServer" id="3541">
    <property type="toxin name" value="S6.10 precursor"/>
</dbReference>
<dbReference type="GO" id="GO:0005576">
    <property type="term" value="C:extracellular region"/>
    <property type="evidence" value="ECO:0007669"/>
    <property type="project" value="UniProtKB-SubCell"/>
</dbReference>
<dbReference type="GO" id="GO:0008200">
    <property type="term" value="F:ion channel inhibitor activity"/>
    <property type="evidence" value="ECO:0007669"/>
    <property type="project" value="InterPro"/>
</dbReference>
<dbReference type="GO" id="GO:0090729">
    <property type="term" value="F:toxin activity"/>
    <property type="evidence" value="ECO:0007669"/>
    <property type="project" value="UniProtKB-KW"/>
</dbReference>
<dbReference type="InterPro" id="IPR004214">
    <property type="entry name" value="Conotoxin"/>
</dbReference>
<dbReference type="Pfam" id="PF02950">
    <property type="entry name" value="Conotoxin"/>
    <property type="match status" value="1"/>
</dbReference>
<keyword id="KW-0165">Cleavage on pair of basic residues</keyword>
<keyword id="KW-1015">Disulfide bond</keyword>
<keyword id="KW-0960">Knottin</keyword>
<keyword id="KW-0964">Secreted</keyword>
<keyword id="KW-0732">Signal</keyword>
<keyword id="KW-0800">Toxin</keyword>
<reference key="1">
    <citation type="journal article" date="2006" name="Biochimie">
        <title>Analysis of expressed sequence tags from the venom ducts of Conus striatus: focusing on the expression profile of conotoxins.</title>
        <authorList>
            <person name="Pi C."/>
            <person name="Liu Y."/>
            <person name="Peng C."/>
            <person name="Jiang X."/>
            <person name="Liu J."/>
            <person name="Xu B."/>
            <person name="Yu X."/>
            <person name="Yu Y."/>
            <person name="Jiang X."/>
            <person name="Wang L."/>
            <person name="Dong M."/>
            <person name="Chen S."/>
            <person name="Xu A.-L."/>
        </authorList>
    </citation>
    <scope>NUCLEOTIDE SEQUENCE [MRNA]</scope>
    <source>
        <tissue>Venom duct</tissue>
    </source>
</reference>
<organism>
    <name type="scientific">Conus striatus</name>
    <name type="common">Striated cone</name>
    <dbReference type="NCBI Taxonomy" id="6493"/>
    <lineage>
        <taxon>Eukaryota</taxon>
        <taxon>Metazoa</taxon>
        <taxon>Spiralia</taxon>
        <taxon>Lophotrochozoa</taxon>
        <taxon>Mollusca</taxon>
        <taxon>Gastropoda</taxon>
        <taxon>Caenogastropoda</taxon>
        <taxon>Neogastropoda</taxon>
        <taxon>Conoidea</taxon>
        <taxon>Conidae</taxon>
        <taxon>Conus</taxon>
        <taxon>Pionoconus</taxon>
    </lineage>
</organism>
<proteinExistence type="evidence at transcript level"/>
<evidence type="ECO:0000250" key="1"/>
<evidence type="ECO:0000255" key="2"/>
<evidence type="ECO:0000305" key="3"/>
<name>O16V_CONST</name>
<protein>
    <recommendedName>
        <fullName>Conotoxin S6.10</fullName>
    </recommendedName>
</protein>